<evidence type="ECO:0000255" key="1">
    <source>
        <dbReference type="HAMAP-Rule" id="MF_00607"/>
    </source>
</evidence>
<accession>Q0KEA7</accession>
<keyword id="KW-0963">Cytoplasm</keyword>
<keyword id="KW-0489">Methyltransferase</keyword>
<keyword id="KW-1185">Reference proteome</keyword>
<keyword id="KW-0694">RNA-binding</keyword>
<keyword id="KW-0698">rRNA processing</keyword>
<keyword id="KW-0949">S-adenosyl-L-methionine</keyword>
<keyword id="KW-0808">Transferase</keyword>
<protein>
    <recommendedName>
        <fullName evidence="1">Ribosomal RNA small subunit methyltransferase A</fullName>
        <ecNumber evidence="1">2.1.1.182</ecNumber>
    </recommendedName>
    <alternativeName>
        <fullName evidence="1">16S rRNA (adenine(1518)-N(6)/adenine(1519)-N(6))-dimethyltransferase</fullName>
    </alternativeName>
    <alternativeName>
        <fullName evidence="1">16S rRNA dimethyladenosine transferase</fullName>
    </alternativeName>
    <alternativeName>
        <fullName evidence="1">16S rRNA dimethylase</fullName>
    </alternativeName>
    <alternativeName>
        <fullName evidence="1">S-adenosylmethionine-6-N', N'-adenosyl(rRNA) dimethyltransferase</fullName>
    </alternativeName>
</protein>
<organism>
    <name type="scientific">Cupriavidus necator (strain ATCC 17699 / DSM 428 / KCTC 22496 / NCIMB 10442 / H16 / Stanier 337)</name>
    <name type="common">Ralstonia eutropha</name>
    <dbReference type="NCBI Taxonomy" id="381666"/>
    <lineage>
        <taxon>Bacteria</taxon>
        <taxon>Pseudomonadati</taxon>
        <taxon>Pseudomonadota</taxon>
        <taxon>Betaproteobacteria</taxon>
        <taxon>Burkholderiales</taxon>
        <taxon>Burkholderiaceae</taxon>
        <taxon>Cupriavidus</taxon>
    </lineage>
</organism>
<name>RSMA_CUPNH</name>
<reference key="1">
    <citation type="journal article" date="2006" name="Nat. Biotechnol.">
        <title>Genome sequence of the bioplastic-producing 'Knallgas' bacterium Ralstonia eutropha H16.</title>
        <authorList>
            <person name="Pohlmann A."/>
            <person name="Fricke W.F."/>
            <person name="Reinecke F."/>
            <person name="Kusian B."/>
            <person name="Liesegang H."/>
            <person name="Cramm R."/>
            <person name="Eitinger T."/>
            <person name="Ewering C."/>
            <person name="Poetter M."/>
            <person name="Schwartz E."/>
            <person name="Strittmatter A."/>
            <person name="Voss I."/>
            <person name="Gottschalk G."/>
            <person name="Steinbuechel A."/>
            <person name="Friedrich B."/>
            <person name="Bowien B."/>
        </authorList>
    </citation>
    <scope>NUCLEOTIDE SEQUENCE [LARGE SCALE GENOMIC DNA]</scope>
    <source>
        <strain>ATCC 17699 / DSM 428 / KCTC 22496 / NCIMB 10442 / H16 / Stanier 337</strain>
    </source>
</reference>
<feature type="chain" id="PRO_1000056656" description="Ribosomal RNA small subunit methyltransferase A">
    <location>
        <begin position="1"/>
        <end position="280"/>
    </location>
</feature>
<feature type="binding site" evidence="1">
    <location>
        <position position="18"/>
    </location>
    <ligand>
        <name>S-adenosyl-L-methionine</name>
        <dbReference type="ChEBI" id="CHEBI:59789"/>
    </ligand>
</feature>
<feature type="binding site" evidence="1">
    <location>
        <position position="20"/>
    </location>
    <ligand>
        <name>S-adenosyl-L-methionine</name>
        <dbReference type="ChEBI" id="CHEBI:59789"/>
    </ligand>
</feature>
<feature type="binding site" evidence="1">
    <location>
        <position position="45"/>
    </location>
    <ligand>
        <name>S-adenosyl-L-methionine</name>
        <dbReference type="ChEBI" id="CHEBI:59789"/>
    </ligand>
</feature>
<feature type="binding site" evidence="1">
    <location>
        <position position="66"/>
    </location>
    <ligand>
        <name>S-adenosyl-L-methionine</name>
        <dbReference type="ChEBI" id="CHEBI:59789"/>
    </ligand>
</feature>
<feature type="binding site" evidence="1">
    <location>
        <position position="89"/>
    </location>
    <ligand>
        <name>S-adenosyl-L-methionine</name>
        <dbReference type="ChEBI" id="CHEBI:59789"/>
    </ligand>
</feature>
<feature type="binding site" evidence="1">
    <location>
        <position position="110"/>
    </location>
    <ligand>
        <name>S-adenosyl-L-methionine</name>
        <dbReference type="ChEBI" id="CHEBI:59789"/>
    </ligand>
</feature>
<proteinExistence type="inferred from homology"/>
<sequence length="280" mass="31365">MRSNVHQGHVARKRFGQNFLVDDTIIHGIVNAISPQADDVLVEIGPGLGALTDPLLERIPQMQVVELDRDLVERLRRRYGERLQVHAGDALAFDFDKLAVPGRPLRIVGNLPYNISSPLLFHLMDFADHVRDQHFMLQKEVVERMVAEPGSKAFGRLSIMLQVRYYMEHVLDVPPGAFNPPPKVDSAVVRMIPWPRHSDGRLRSPHADCDITVLGDVVTAAFSQRRKVLRNTLSFLRDQVDFDAMGFDLGRRAEEVPVGEYVELARRLGGTPSGRAGQAA</sequence>
<comment type="function">
    <text evidence="1">Specifically dimethylates two adjacent adenosines (A1518 and A1519) in the loop of a conserved hairpin near the 3'-end of 16S rRNA in the 30S particle. May play a critical role in biogenesis of 30S subunits.</text>
</comment>
<comment type="catalytic activity">
    <reaction evidence="1">
        <text>adenosine(1518)/adenosine(1519) in 16S rRNA + 4 S-adenosyl-L-methionine = N(6)-dimethyladenosine(1518)/N(6)-dimethyladenosine(1519) in 16S rRNA + 4 S-adenosyl-L-homocysteine + 4 H(+)</text>
        <dbReference type="Rhea" id="RHEA:19609"/>
        <dbReference type="Rhea" id="RHEA-COMP:10232"/>
        <dbReference type="Rhea" id="RHEA-COMP:10233"/>
        <dbReference type="ChEBI" id="CHEBI:15378"/>
        <dbReference type="ChEBI" id="CHEBI:57856"/>
        <dbReference type="ChEBI" id="CHEBI:59789"/>
        <dbReference type="ChEBI" id="CHEBI:74411"/>
        <dbReference type="ChEBI" id="CHEBI:74493"/>
        <dbReference type="EC" id="2.1.1.182"/>
    </reaction>
</comment>
<comment type="subcellular location">
    <subcellularLocation>
        <location evidence="1">Cytoplasm</location>
    </subcellularLocation>
</comment>
<comment type="similarity">
    <text evidence="1">Belongs to the class I-like SAM-binding methyltransferase superfamily. rRNA adenine N(6)-methyltransferase family. RsmA subfamily.</text>
</comment>
<dbReference type="EC" id="2.1.1.182" evidence="1"/>
<dbReference type="EMBL" id="AM260479">
    <property type="protein sequence ID" value="CAJ91664.1"/>
    <property type="molecule type" value="Genomic_DNA"/>
</dbReference>
<dbReference type="RefSeq" id="WP_010813875.1">
    <property type="nucleotide sequence ID" value="NZ_CP039287.1"/>
</dbReference>
<dbReference type="SMR" id="Q0KEA7"/>
<dbReference type="STRING" id="381666.H16_A0514"/>
<dbReference type="KEGG" id="reh:H16_A0514"/>
<dbReference type="eggNOG" id="COG0030">
    <property type="taxonomic scope" value="Bacteria"/>
</dbReference>
<dbReference type="HOGENOM" id="CLU_041220_0_1_4"/>
<dbReference type="OrthoDB" id="9814755at2"/>
<dbReference type="Proteomes" id="UP000008210">
    <property type="component" value="Chromosome 1"/>
</dbReference>
<dbReference type="GO" id="GO:0005829">
    <property type="term" value="C:cytosol"/>
    <property type="evidence" value="ECO:0007669"/>
    <property type="project" value="TreeGrafter"/>
</dbReference>
<dbReference type="GO" id="GO:0052908">
    <property type="term" value="F:16S rRNA (adenine(1518)-N(6)/adenine(1519)-N(6))-dimethyltransferase activity"/>
    <property type="evidence" value="ECO:0007669"/>
    <property type="project" value="UniProtKB-EC"/>
</dbReference>
<dbReference type="GO" id="GO:0003723">
    <property type="term" value="F:RNA binding"/>
    <property type="evidence" value="ECO:0007669"/>
    <property type="project" value="UniProtKB-KW"/>
</dbReference>
<dbReference type="FunFam" id="1.10.8.100:FF:000001">
    <property type="entry name" value="Ribosomal RNA small subunit methyltransferase A"/>
    <property type="match status" value="1"/>
</dbReference>
<dbReference type="Gene3D" id="1.10.8.100">
    <property type="entry name" value="Ribosomal RNA adenine dimethylase-like, domain 2"/>
    <property type="match status" value="1"/>
</dbReference>
<dbReference type="Gene3D" id="3.40.50.150">
    <property type="entry name" value="Vaccinia Virus protein VP39"/>
    <property type="match status" value="1"/>
</dbReference>
<dbReference type="HAMAP" id="MF_00607">
    <property type="entry name" value="16SrRNA_methyltr_A"/>
    <property type="match status" value="1"/>
</dbReference>
<dbReference type="InterPro" id="IPR001737">
    <property type="entry name" value="KsgA/Erm"/>
</dbReference>
<dbReference type="InterPro" id="IPR023165">
    <property type="entry name" value="rRNA_Ade_diMease-like_C"/>
</dbReference>
<dbReference type="InterPro" id="IPR020596">
    <property type="entry name" value="rRNA_Ade_Mease_Trfase_CS"/>
</dbReference>
<dbReference type="InterPro" id="IPR020598">
    <property type="entry name" value="rRNA_Ade_methylase_Trfase_N"/>
</dbReference>
<dbReference type="InterPro" id="IPR011530">
    <property type="entry name" value="rRNA_adenine_dimethylase"/>
</dbReference>
<dbReference type="InterPro" id="IPR029063">
    <property type="entry name" value="SAM-dependent_MTases_sf"/>
</dbReference>
<dbReference type="NCBIfam" id="TIGR00755">
    <property type="entry name" value="ksgA"/>
    <property type="match status" value="1"/>
</dbReference>
<dbReference type="PANTHER" id="PTHR11727">
    <property type="entry name" value="DIMETHYLADENOSINE TRANSFERASE"/>
    <property type="match status" value="1"/>
</dbReference>
<dbReference type="PANTHER" id="PTHR11727:SF7">
    <property type="entry name" value="DIMETHYLADENOSINE TRANSFERASE-RELATED"/>
    <property type="match status" value="1"/>
</dbReference>
<dbReference type="Pfam" id="PF00398">
    <property type="entry name" value="RrnaAD"/>
    <property type="match status" value="1"/>
</dbReference>
<dbReference type="SMART" id="SM00650">
    <property type="entry name" value="rADc"/>
    <property type="match status" value="1"/>
</dbReference>
<dbReference type="SUPFAM" id="SSF53335">
    <property type="entry name" value="S-adenosyl-L-methionine-dependent methyltransferases"/>
    <property type="match status" value="1"/>
</dbReference>
<dbReference type="PROSITE" id="PS01131">
    <property type="entry name" value="RRNA_A_DIMETH"/>
    <property type="match status" value="1"/>
</dbReference>
<dbReference type="PROSITE" id="PS51689">
    <property type="entry name" value="SAM_RNA_A_N6_MT"/>
    <property type="match status" value="1"/>
</dbReference>
<gene>
    <name evidence="1" type="primary">rsmA</name>
    <name evidence="1" type="synonym">ksgA</name>
    <name type="ordered locus">H16_A0514</name>
</gene>